<gene>
    <name evidence="1" type="primary">rpoA</name>
    <name type="ordered locus">LL2068</name>
    <name type="ORF">L0136</name>
</gene>
<comment type="function">
    <text evidence="1">DNA-dependent RNA polymerase catalyzes the transcription of DNA into RNA using the four ribonucleoside triphosphates as substrates.</text>
</comment>
<comment type="catalytic activity">
    <reaction evidence="1">
        <text>RNA(n) + a ribonucleoside 5'-triphosphate = RNA(n+1) + diphosphate</text>
        <dbReference type="Rhea" id="RHEA:21248"/>
        <dbReference type="Rhea" id="RHEA-COMP:14527"/>
        <dbReference type="Rhea" id="RHEA-COMP:17342"/>
        <dbReference type="ChEBI" id="CHEBI:33019"/>
        <dbReference type="ChEBI" id="CHEBI:61557"/>
        <dbReference type="ChEBI" id="CHEBI:140395"/>
        <dbReference type="EC" id="2.7.7.6"/>
    </reaction>
</comment>
<comment type="subunit">
    <text evidence="1">Homodimer. The RNAP catalytic core consists of 2 alpha, 1 beta, 1 beta' and 1 omega subunit. When a sigma factor is associated with the core the holoenzyme is formed, which can initiate transcription.</text>
</comment>
<comment type="domain">
    <text evidence="1">The N-terminal domain is essential for RNAP assembly and basal transcription, whereas the C-terminal domain is involved in interaction with transcriptional regulators and with upstream promoter elements.</text>
</comment>
<comment type="similarity">
    <text evidence="1">Belongs to the RNA polymerase alpha chain family.</text>
</comment>
<reference key="1">
    <citation type="journal article" date="2001" name="Genome Res.">
        <title>The complete genome sequence of the lactic acid bacterium Lactococcus lactis ssp. lactis IL1403.</title>
        <authorList>
            <person name="Bolotin A."/>
            <person name="Wincker P."/>
            <person name="Mauger S."/>
            <person name="Jaillon O."/>
            <person name="Malarme K."/>
            <person name="Weissenbach J."/>
            <person name="Ehrlich S.D."/>
            <person name="Sorokin A."/>
        </authorList>
    </citation>
    <scope>NUCLEOTIDE SEQUENCE [LARGE SCALE GENOMIC DNA]</scope>
    <source>
        <strain>IL1403</strain>
    </source>
</reference>
<sequence length="312" mass="34194">MIEFEKPKITKFDESENYGKFVVEPLERGYGTTLGNSLRRVLLSSLPGAAVTSIQIEGVQHEFATIPGVREDVIQIVLAVKGIAIKSYVESEKQIELDVTGPMDVTAGDILTDSDIEIVNKDHYLFSIAEGHSMRAVMTVKKGYGYVPDDENKVDGAPIGTIAVDSIYTPVSKVNYQVEPARVGGDSSYDKLTLEITTNGTIVSDEALSLSAKILTDHLNLFVDLSEVAAEAETLVVKDEVKTERVLDKIIEEMDFSVRAYNGLKRAGINTVADIVEMSEADMIKVKNLGHKSVEEVKVKLTELGLSLKKRK</sequence>
<protein>
    <recommendedName>
        <fullName evidence="1">DNA-directed RNA polymerase subunit alpha</fullName>
        <shortName evidence="1">RNAP subunit alpha</shortName>
        <ecNumber evidence="1">2.7.7.6</ecNumber>
    </recommendedName>
    <alternativeName>
        <fullName evidence="1">RNA polymerase subunit alpha</fullName>
    </alternativeName>
    <alternativeName>
        <fullName evidence="1">Transcriptase subunit alpha</fullName>
    </alternativeName>
</protein>
<keyword id="KW-0240">DNA-directed RNA polymerase</keyword>
<keyword id="KW-0548">Nucleotidyltransferase</keyword>
<keyword id="KW-1185">Reference proteome</keyword>
<keyword id="KW-0804">Transcription</keyword>
<keyword id="KW-0808">Transferase</keyword>
<accession>Q9CDY3</accession>
<organism>
    <name type="scientific">Lactococcus lactis subsp. lactis (strain IL1403)</name>
    <name type="common">Streptococcus lactis</name>
    <dbReference type="NCBI Taxonomy" id="272623"/>
    <lineage>
        <taxon>Bacteria</taxon>
        <taxon>Bacillati</taxon>
        <taxon>Bacillota</taxon>
        <taxon>Bacilli</taxon>
        <taxon>Lactobacillales</taxon>
        <taxon>Streptococcaceae</taxon>
        <taxon>Lactococcus</taxon>
    </lineage>
</organism>
<dbReference type="EC" id="2.7.7.6" evidence="1"/>
<dbReference type="EMBL" id="AE005176">
    <property type="protein sequence ID" value="AAK06166.1"/>
    <property type="molecule type" value="Genomic_DNA"/>
</dbReference>
<dbReference type="PIR" id="D86883">
    <property type="entry name" value="D86883"/>
</dbReference>
<dbReference type="RefSeq" id="NP_268225.1">
    <property type="nucleotide sequence ID" value="NC_002662.1"/>
</dbReference>
<dbReference type="RefSeq" id="WP_010906296.1">
    <property type="nucleotide sequence ID" value="NC_002662.1"/>
</dbReference>
<dbReference type="SMR" id="Q9CDY3"/>
<dbReference type="PaxDb" id="272623-L0136"/>
<dbReference type="EnsemblBacteria" id="AAK06166">
    <property type="protein sequence ID" value="AAK06166"/>
    <property type="gene ID" value="L0136"/>
</dbReference>
<dbReference type="KEGG" id="lla:L0136"/>
<dbReference type="PATRIC" id="fig|272623.7.peg.2227"/>
<dbReference type="eggNOG" id="COG0202">
    <property type="taxonomic scope" value="Bacteria"/>
</dbReference>
<dbReference type="HOGENOM" id="CLU_053084_0_1_9"/>
<dbReference type="OrthoDB" id="9805706at2"/>
<dbReference type="Proteomes" id="UP000002196">
    <property type="component" value="Chromosome"/>
</dbReference>
<dbReference type="GO" id="GO:0005737">
    <property type="term" value="C:cytoplasm"/>
    <property type="evidence" value="ECO:0007669"/>
    <property type="project" value="UniProtKB-ARBA"/>
</dbReference>
<dbReference type="GO" id="GO:0000428">
    <property type="term" value="C:DNA-directed RNA polymerase complex"/>
    <property type="evidence" value="ECO:0007669"/>
    <property type="project" value="UniProtKB-KW"/>
</dbReference>
<dbReference type="GO" id="GO:0003677">
    <property type="term" value="F:DNA binding"/>
    <property type="evidence" value="ECO:0007669"/>
    <property type="project" value="UniProtKB-UniRule"/>
</dbReference>
<dbReference type="GO" id="GO:0003899">
    <property type="term" value="F:DNA-directed RNA polymerase activity"/>
    <property type="evidence" value="ECO:0007669"/>
    <property type="project" value="UniProtKB-UniRule"/>
</dbReference>
<dbReference type="GO" id="GO:0046983">
    <property type="term" value="F:protein dimerization activity"/>
    <property type="evidence" value="ECO:0007669"/>
    <property type="project" value="InterPro"/>
</dbReference>
<dbReference type="GO" id="GO:0006351">
    <property type="term" value="P:DNA-templated transcription"/>
    <property type="evidence" value="ECO:0007669"/>
    <property type="project" value="UniProtKB-UniRule"/>
</dbReference>
<dbReference type="CDD" id="cd06928">
    <property type="entry name" value="RNAP_alpha_NTD"/>
    <property type="match status" value="1"/>
</dbReference>
<dbReference type="FunFam" id="2.170.120.12:FF:000001">
    <property type="entry name" value="DNA-directed RNA polymerase subunit alpha"/>
    <property type="match status" value="1"/>
</dbReference>
<dbReference type="Gene3D" id="1.10.150.20">
    <property type="entry name" value="5' to 3' exonuclease, C-terminal subdomain"/>
    <property type="match status" value="1"/>
</dbReference>
<dbReference type="Gene3D" id="2.170.120.12">
    <property type="entry name" value="DNA-directed RNA polymerase, insert domain"/>
    <property type="match status" value="1"/>
</dbReference>
<dbReference type="Gene3D" id="3.30.1360.10">
    <property type="entry name" value="RNA polymerase, RBP11-like subunit"/>
    <property type="match status" value="1"/>
</dbReference>
<dbReference type="HAMAP" id="MF_00059">
    <property type="entry name" value="RNApol_bact_RpoA"/>
    <property type="match status" value="1"/>
</dbReference>
<dbReference type="InterPro" id="IPR011262">
    <property type="entry name" value="DNA-dir_RNA_pol_insert"/>
</dbReference>
<dbReference type="InterPro" id="IPR011263">
    <property type="entry name" value="DNA-dir_RNA_pol_RpoA/D/Rpb3"/>
</dbReference>
<dbReference type="InterPro" id="IPR011773">
    <property type="entry name" value="DNA-dir_RpoA"/>
</dbReference>
<dbReference type="InterPro" id="IPR036603">
    <property type="entry name" value="RBP11-like"/>
</dbReference>
<dbReference type="InterPro" id="IPR011260">
    <property type="entry name" value="RNAP_asu_C"/>
</dbReference>
<dbReference type="InterPro" id="IPR036643">
    <property type="entry name" value="RNApol_insert_sf"/>
</dbReference>
<dbReference type="NCBIfam" id="NF003513">
    <property type="entry name" value="PRK05182.1-2"/>
    <property type="match status" value="1"/>
</dbReference>
<dbReference type="NCBIfam" id="NF003515">
    <property type="entry name" value="PRK05182.2-1"/>
    <property type="match status" value="1"/>
</dbReference>
<dbReference type="NCBIfam" id="NF003518">
    <property type="entry name" value="PRK05182.2-4"/>
    <property type="match status" value="1"/>
</dbReference>
<dbReference type="NCBIfam" id="NF003519">
    <property type="entry name" value="PRK05182.2-5"/>
    <property type="match status" value="1"/>
</dbReference>
<dbReference type="NCBIfam" id="TIGR02027">
    <property type="entry name" value="rpoA"/>
    <property type="match status" value="1"/>
</dbReference>
<dbReference type="Pfam" id="PF01000">
    <property type="entry name" value="RNA_pol_A_bac"/>
    <property type="match status" value="1"/>
</dbReference>
<dbReference type="Pfam" id="PF03118">
    <property type="entry name" value="RNA_pol_A_CTD"/>
    <property type="match status" value="1"/>
</dbReference>
<dbReference type="Pfam" id="PF01193">
    <property type="entry name" value="RNA_pol_L"/>
    <property type="match status" value="1"/>
</dbReference>
<dbReference type="SMART" id="SM00662">
    <property type="entry name" value="RPOLD"/>
    <property type="match status" value="1"/>
</dbReference>
<dbReference type="SUPFAM" id="SSF47789">
    <property type="entry name" value="C-terminal domain of RNA polymerase alpha subunit"/>
    <property type="match status" value="1"/>
</dbReference>
<dbReference type="SUPFAM" id="SSF56553">
    <property type="entry name" value="Insert subdomain of RNA polymerase alpha subunit"/>
    <property type="match status" value="1"/>
</dbReference>
<dbReference type="SUPFAM" id="SSF55257">
    <property type="entry name" value="RBP11-like subunits of RNA polymerase"/>
    <property type="match status" value="1"/>
</dbReference>
<feature type="chain" id="PRO_0000175320" description="DNA-directed RNA polymerase subunit alpha">
    <location>
        <begin position="1"/>
        <end position="312"/>
    </location>
</feature>
<feature type="region of interest" description="Alpha N-terminal domain (alpha-NTD)" evidence="1">
    <location>
        <begin position="1"/>
        <end position="226"/>
    </location>
</feature>
<feature type="region of interest" description="Alpha C-terminal domain (alpha-CTD)" evidence="1">
    <location>
        <begin position="243"/>
        <end position="312"/>
    </location>
</feature>
<name>RPOA_LACLA</name>
<evidence type="ECO:0000255" key="1">
    <source>
        <dbReference type="HAMAP-Rule" id="MF_00059"/>
    </source>
</evidence>
<proteinExistence type="inferred from homology"/>